<evidence type="ECO:0000255" key="1">
    <source>
        <dbReference type="HAMAP-Rule" id="MF_01452"/>
    </source>
</evidence>
<dbReference type="EC" id="3.1.-.-" evidence="1"/>
<dbReference type="EMBL" id="CP000728">
    <property type="protein sequence ID" value="ABS41873.1"/>
    <property type="molecule type" value="Genomic_DNA"/>
</dbReference>
<dbReference type="RefSeq" id="WP_011987440.1">
    <property type="nucleotide sequence ID" value="NC_009699.1"/>
</dbReference>
<dbReference type="SMR" id="A7GAI7"/>
<dbReference type="KEGG" id="cbf:CLI_0511"/>
<dbReference type="HOGENOM" id="CLU_007838_0_0_9"/>
<dbReference type="Proteomes" id="UP000002410">
    <property type="component" value="Chromosome"/>
</dbReference>
<dbReference type="GO" id="GO:0051539">
    <property type="term" value="F:4 iron, 4 sulfur cluster binding"/>
    <property type="evidence" value="ECO:0007669"/>
    <property type="project" value="UniProtKB-KW"/>
</dbReference>
<dbReference type="GO" id="GO:0008409">
    <property type="term" value="F:5'-3' exonuclease activity"/>
    <property type="evidence" value="ECO:0007669"/>
    <property type="project" value="UniProtKB-UniRule"/>
</dbReference>
<dbReference type="GO" id="GO:0005524">
    <property type="term" value="F:ATP binding"/>
    <property type="evidence" value="ECO:0007669"/>
    <property type="project" value="UniProtKB-UniRule"/>
</dbReference>
<dbReference type="GO" id="GO:0003690">
    <property type="term" value="F:double-stranded DNA binding"/>
    <property type="evidence" value="ECO:0007669"/>
    <property type="project" value="UniProtKB-UniRule"/>
</dbReference>
<dbReference type="GO" id="GO:0004386">
    <property type="term" value="F:helicase activity"/>
    <property type="evidence" value="ECO:0007669"/>
    <property type="project" value="UniProtKB-KW"/>
</dbReference>
<dbReference type="GO" id="GO:0046872">
    <property type="term" value="F:metal ion binding"/>
    <property type="evidence" value="ECO:0007669"/>
    <property type="project" value="UniProtKB-KW"/>
</dbReference>
<dbReference type="GO" id="GO:0000724">
    <property type="term" value="P:double-strand break repair via homologous recombination"/>
    <property type="evidence" value="ECO:0007669"/>
    <property type="project" value="UniProtKB-UniRule"/>
</dbReference>
<dbReference type="FunFam" id="3.40.50.300:FF:002956">
    <property type="entry name" value="ATP-dependent helicase/deoxyribonuclease subunit B"/>
    <property type="match status" value="1"/>
</dbReference>
<dbReference type="FunFam" id="3.40.50.300:FF:002959">
    <property type="entry name" value="ATP-dependent helicase/deoxyribonuclease subunit B"/>
    <property type="match status" value="1"/>
</dbReference>
<dbReference type="FunFam" id="3.40.50.300:FF:003174">
    <property type="entry name" value="ATP-dependent helicase/deoxyribonuclease subunit B"/>
    <property type="match status" value="1"/>
</dbReference>
<dbReference type="Gene3D" id="3.90.320.10">
    <property type="match status" value="1"/>
</dbReference>
<dbReference type="Gene3D" id="6.10.140.1030">
    <property type="match status" value="1"/>
</dbReference>
<dbReference type="Gene3D" id="3.40.50.300">
    <property type="entry name" value="P-loop containing nucleotide triphosphate hydrolases"/>
    <property type="match status" value="3"/>
</dbReference>
<dbReference type="HAMAP" id="MF_01452">
    <property type="entry name" value="AddB_type1"/>
    <property type="match status" value="1"/>
</dbReference>
<dbReference type="InterPro" id="IPR049035">
    <property type="entry name" value="ADDB_N"/>
</dbReference>
<dbReference type="InterPro" id="IPR014140">
    <property type="entry name" value="DNA_helicase_suAddB"/>
</dbReference>
<dbReference type="InterPro" id="IPR027417">
    <property type="entry name" value="P-loop_NTPase"/>
</dbReference>
<dbReference type="InterPro" id="IPR011604">
    <property type="entry name" value="PDDEXK-like_dom_sf"/>
</dbReference>
<dbReference type="InterPro" id="IPR038726">
    <property type="entry name" value="PDDEXK_AddAB-type"/>
</dbReference>
<dbReference type="NCBIfam" id="TIGR02773">
    <property type="entry name" value="addB_Gpos"/>
    <property type="match status" value="1"/>
</dbReference>
<dbReference type="PANTHER" id="PTHR30591">
    <property type="entry name" value="RECBCD ENZYME SUBUNIT RECC"/>
    <property type="match status" value="1"/>
</dbReference>
<dbReference type="PANTHER" id="PTHR30591:SF1">
    <property type="entry name" value="RECBCD ENZYME SUBUNIT RECC"/>
    <property type="match status" value="1"/>
</dbReference>
<dbReference type="Pfam" id="PF21445">
    <property type="entry name" value="ADDB_N"/>
    <property type="match status" value="1"/>
</dbReference>
<dbReference type="Pfam" id="PF12705">
    <property type="entry name" value="PDDEXK_1"/>
    <property type="match status" value="1"/>
</dbReference>
<dbReference type="SUPFAM" id="SSF52540">
    <property type="entry name" value="P-loop containing nucleoside triphosphate hydrolases"/>
    <property type="match status" value="1"/>
</dbReference>
<accession>A7GAI7</accession>
<protein>
    <recommendedName>
        <fullName evidence="1">ATP-dependent helicase/deoxyribonuclease subunit B</fullName>
        <ecNumber evidence="1">3.1.-.-</ecNumber>
    </recommendedName>
    <alternativeName>
        <fullName evidence="1">ATP-dependent helicase/nuclease subunit AddB</fullName>
    </alternativeName>
</protein>
<reference key="1">
    <citation type="submission" date="2007-06" db="EMBL/GenBank/DDBJ databases">
        <authorList>
            <person name="Brinkac L.M."/>
            <person name="Daugherty S."/>
            <person name="Dodson R.J."/>
            <person name="Madupu R."/>
            <person name="Brown J.L."/>
            <person name="Bruce D."/>
            <person name="Detter C."/>
            <person name="Munk C."/>
            <person name="Smith L.A."/>
            <person name="Smith T.J."/>
            <person name="White O."/>
            <person name="Brettin T.S."/>
        </authorList>
    </citation>
    <scope>NUCLEOTIDE SEQUENCE [LARGE SCALE GENOMIC DNA]</scope>
    <source>
        <strain>Langeland / NCTC 10281 / Type F</strain>
    </source>
</reference>
<keyword id="KW-0004">4Fe-4S</keyword>
<keyword id="KW-0067">ATP-binding</keyword>
<keyword id="KW-0227">DNA damage</keyword>
<keyword id="KW-0234">DNA repair</keyword>
<keyword id="KW-0238">DNA-binding</keyword>
<keyword id="KW-0269">Exonuclease</keyword>
<keyword id="KW-0347">Helicase</keyword>
<keyword id="KW-0378">Hydrolase</keyword>
<keyword id="KW-0408">Iron</keyword>
<keyword id="KW-0411">Iron-sulfur</keyword>
<keyword id="KW-0479">Metal-binding</keyword>
<keyword id="KW-0540">Nuclease</keyword>
<keyword id="KW-0547">Nucleotide-binding</keyword>
<gene>
    <name evidence="1" type="primary">addB</name>
    <name type="ordered locus">CLI_0511</name>
</gene>
<name>ADDB_CLOBL</name>
<proteinExistence type="inferred from homology"/>
<organism>
    <name type="scientific">Clostridium botulinum (strain Langeland / NCTC 10281 / Type F)</name>
    <dbReference type="NCBI Taxonomy" id="441772"/>
    <lineage>
        <taxon>Bacteria</taxon>
        <taxon>Bacillati</taxon>
        <taxon>Bacillota</taxon>
        <taxon>Clostridia</taxon>
        <taxon>Eubacteriales</taxon>
        <taxon>Clostridiaceae</taxon>
        <taxon>Clostridium</taxon>
    </lineage>
</organism>
<sequence>MSLRFIYGRAGSGKSQYCLNSIKNRIEEDIDRPLILLVPEQFSFQAEKNLIEVLDEKTGFKTQVLSFKRMAYRVFNEVGGITAKHMNESGKSMLLYNIIEDNKNNLKVFKKAAKRQGFITTISDIITEFKRYNITPEIILNNLENIEGDNLKYKMEDLALIFSQFETRLHKNYIDNEDDLTILVEKLNKSKQFDNAEIWIDEFSSFSPQEYSVLEKLLLKSYRINITLCTDYLNQGRFVDTTDVFSPIKNTENKLLQIIEDNNIKLDKPIALKCDPCARFKNSAELQHLEKNMFSFPYKEYKNETKDICMLKTLNQFTEIENTAKDIIKLCIDKGCRFKDIAVITGDLEGYENIISSVFLQYNIPFFIDKKREINNNPIIVLILSALEVLSKNWTYESVFRYLKTGLLDINNEEMDILENYVLANGIKGYQWTNDKPWEHKSFSNYELEDQALKELLAKINDIRYKAMEPIVTLNKNFKSIDKAKEFCEVLYEFLCNINLPDKIQNMIEDFKVEGEIEKASEYNQIWNIVMEVLDQIVEVIGEEKISLKEFFKILQTGFSEYEIGLIPPTLDQVMVGSITRLRSHNINTLYIVGVNDGIFPSPLKEEGILSDDDREFLGDKGLEIAKDTKSIAFEEQFLVYSTLTTPSKYLRLSYPIADGEGKTLRPSIIISRIKKIFANICEENDIVKLNGEEEELKNISSAKPTFNYLISNLRKDVEGVKIDNIWGDTYKWYLENEFWIEKLNRLIKGFDYTNQSKYIETKKIRNLYGKPLKISVSRVEKFSQCPFAYFVQYGLKAKDRKIFNLSYPDLGIFMHSILEKFSHELEKKGLEWDTMDLNWAEEEIDKLINEELDNKSLDILNSSKRYEYVTKSVKKILKRSIWLIGEHIKRGNFKPSYYELSFDIDGDYPPIAMELHSGEVINLIGRVDRVDLLQKDGATYLKIIDYKSGIKEFKLSDVYYGLQLQLLIYLDAILTELAERSGINGEPGALLYLKLDDPIVKNTVDMSDEEIEKSIIKNLKMKGLILNDPNVIRDMDNIISGISDIIPVMVKKDGGVSEGRSSVATKEEFETLRKYVRYTIIEICEEMLEGNIEIKPYKKKDGSSCDYCIYSSVCKFDTNIRGNKYNILIDKKDEEVWDAIKKKLEYKNI</sequence>
<feature type="chain" id="PRO_0000379173" description="ATP-dependent helicase/deoxyribonuclease subunit B">
    <location>
        <begin position="1"/>
        <end position="1150"/>
    </location>
</feature>
<feature type="binding site" evidence="1">
    <location>
        <begin position="8"/>
        <end position="15"/>
    </location>
    <ligand>
        <name>ATP</name>
        <dbReference type="ChEBI" id="CHEBI:30616"/>
    </ligand>
</feature>
<feature type="binding site" evidence="1">
    <location>
        <position position="786"/>
    </location>
    <ligand>
        <name>[4Fe-4S] cluster</name>
        <dbReference type="ChEBI" id="CHEBI:49883"/>
    </ligand>
</feature>
<feature type="binding site" evidence="1">
    <location>
        <position position="1106"/>
    </location>
    <ligand>
        <name>[4Fe-4S] cluster</name>
        <dbReference type="ChEBI" id="CHEBI:49883"/>
    </ligand>
</feature>
<feature type="binding site" evidence="1">
    <location>
        <position position="1109"/>
    </location>
    <ligand>
        <name>[4Fe-4S] cluster</name>
        <dbReference type="ChEBI" id="CHEBI:49883"/>
    </ligand>
</feature>
<feature type="binding site" evidence="1">
    <location>
        <position position="1115"/>
    </location>
    <ligand>
        <name>[4Fe-4S] cluster</name>
        <dbReference type="ChEBI" id="CHEBI:49883"/>
    </ligand>
</feature>
<comment type="function">
    <text evidence="1">The heterodimer acts as both an ATP-dependent DNA helicase and an ATP-dependent, dual-direction single-stranded exonuclease. Recognizes the chi site generating a DNA molecule suitable for the initiation of homologous recombination. The AddB subunit has 5' -&gt; 3' nuclease activity but not helicase activity.</text>
</comment>
<comment type="cofactor">
    <cofactor evidence="1">
        <name>Mg(2+)</name>
        <dbReference type="ChEBI" id="CHEBI:18420"/>
    </cofactor>
</comment>
<comment type="cofactor">
    <cofactor evidence="1">
        <name>[4Fe-4S] cluster</name>
        <dbReference type="ChEBI" id="CHEBI:49883"/>
    </cofactor>
    <text evidence="1">Binds 1 [4Fe-4S] cluster.</text>
</comment>
<comment type="subunit">
    <text evidence="1">Heterodimer of AddA and AddB.</text>
</comment>
<comment type="miscellaneous">
    <text evidence="1">Despite having conserved helicase domains, this subunit does not have helicase activity.</text>
</comment>
<comment type="similarity">
    <text evidence="1">Belongs to the helicase family. AddB/RexB type 1 subfamily.</text>
</comment>